<sequence>MELNSLLILLEAAEYLERRDREAEHGYASVLPFDGDFAREKTKAAGLVRKAPNNRSSHNELEKHRRAKLRLYLEQLKQLVPLGPDSTRHTTLSLLKRAKVHIKKLEEQDRRALSIKEQLQQEHRFLKRRLEQLSVQSVERVRTDSTGSAVSTDDSEQEVDIEGMEFGPGELDSVGSSSDADDHYSLQSGTGGDSGFGPHCRRLGRPALS</sequence>
<proteinExistence type="evidence at protein level"/>
<dbReference type="EMBL" id="AF040963">
    <property type="protein sequence ID" value="AAB97009.1"/>
    <property type="molecule type" value="mRNA"/>
</dbReference>
<dbReference type="EMBL" id="AF082740">
    <property type="protein sequence ID" value="AAF98553.1"/>
    <property type="molecule type" value="mRNA"/>
</dbReference>
<dbReference type="EMBL" id="BT019969">
    <property type="protein sequence ID" value="AAV38772.1"/>
    <property type="molecule type" value="mRNA"/>
</dbReference>
<dbReference type="EMBL" id="BT019970">
    <property type="protein sequence ID" value="AAV38773.1"/>
    <property type="molecule type" value="mRNA"/>
</dbReference>
<dbReference type="EMBL" id="Z49250">
    <property type="protein sequence ID" value="CAA89217.1"/>
    <property type="molecule type" value="Genomic_DNA"/>
</dbReference>
<dbReference type="EMBL" id="AL158068">
    <property type="status" value="NOT_ANNOTATED_CDS"/>
    <property type="molecule type" value="Genomic_DNA"/>
</dbReference>
<dbReference type="EMBL" id="BC068060">
    <property type="protein sequence ID" value="AAH68060.1"/>
    <property type="molecule type" value="mRNA"/>
</dbReference>
<dbReference type="CCDS" id="CCDS3361.1"/>
<dbReference type="RefSeq" id="NP_006445.1">
    <property type="nucleotide sequence ID" value="NM_006454.3"/>
</dbReference>
<dbReference type="SMR" id="Q14582"/>
<dbReference type="BioGRID" id="115854">
    <property type="interactions" value="13"/>
</dbReference>
<dbReference type="ComplexPortal" id="CPX-2520">
    <property type="entry name" value="MXD4-MLX transcriptional repressor complex"/>
</dbReference>
<dbReference type="ComplexPortal" id="CPX-7601">
    <property type="entry name" value="MXD4-MAX transcriptional repressor complex"/>
</dbReference>
<dbReference type="ELM" id="Q14582"/>
<dbReference type="FunCoup" id="Q14582">
    <property type="interactions" value="1622"/>
</dbReference>
<dbReference type="IntAct" id="Q14582">
    <property type="interactions" value="4"/>
</dbReference>
<dbReference type="MINT" id="Q14582"/>
<dbReference type="STRING" id="9606.ENSP00000337889"/>
<dbReference type="iPTMnet" id="Q14582"/>
<dbReference type="PhosphoSitePlus" id="Q14582"/>
<dbReference type="BioMuta" id="MXD4"/>
<dbReference type="DMDM" id="6016524"/>
<dbReference type="jPOST" id="Q14582"/>
<dbReference type="MassIVE" id="Q14582"/>
<dbReference type="PaxDb" id="9606-ENSP00000337889"/>
<dbReference type="PeptideAtlas" id="Q14582"/>
<dbReference type="ProteomicsDB" id="60056"/>
<dbReference type="TopDownProteomics" id="Q14582"/>
<dbReference type="Antibodypedia" id="8823">
    <property type="antibodies" value="190 antibodies from 29 providers"/>
</dbReference>
<dbReference type="DNASU" id="10608"/>
<dbReference type="Ensembl" id="ENST00000337190.7">
    <property type="protein sequence ID" value="ENSP00000337889.2"/>
    <property type="gene ID" value="ENSG00000123933.17"/>
</dbReference>
<dbReference type="GeneID" id="10608"/>
<dbReference type="KEGG" id="hsa:10608"/>
<dbReference type="MANE-Select" id="ENST00000337190.7">
    <property type="protein sequence ID" value="ENSP00000337889.2"/>
    <property type="RefSeq nucleotide sequence ID" value="NM_006454.3"/>
    <property type="RefSeq protein sequence ID" value="NP_006445.1"/>
</dbReference>
<dbReference type="UCSC" id="uc003geu.2">
    <property type="organism name" value="human"/>
</dbReference>
<dbReference type="AGR" id="HGNC:13906"/>
<dbReference type="CTD" id="10608"/>
<dbReference type="DisGeNET" id="10608"/>
<dbReference type="GeneCards" id="MXD4"/>
<dbReference type="HGNC" id="HGNC:13906">
    <property type="gene designation" value="MXD4"/>
</dbReference>
<dbReference type="HPA" id="ENSG00000123933">
    <property type="expression patterns" value="Low tissue specificity"/>
</dbReference>
<dbReference type="MIM" id="620016">
    <property type="type" value="gene"/>
</dbReference>
<dbReference type="neXtProt" id="NX_Q14582"/>
<dbReference type="OpenTargets" id="ENSG00000123933"/>
<dbReference type="PharmGKB" id="PA134914966"/>
<dbReference type="VEuPathDB" id="HostDB:ENSG00000123933"/>
<dbReference type="eggNOG" id="KOG2483">
    <property type="taxonomic scope" value="Eukaryota"/>
</dbReference>
<dbReference type="GeneTree" id="ENSGT00940000160120"/>
<dbReference type="HOGENOM" id="CLU_082604_2_0_1"/>
<dbReference type="InParanoid" id="Q14582"/>
<dbReference type="OMA" id="GPHCRRP"/>
<dbReference type="OrthoDB" id="5920083at2759"/>
<dbReference type="PAN-GO" id="Q14582">
    <property type="GO annotations" value="3 GO annotations based on evolutionary models"/>
</dbReference>
<dbReference type="PhylomeDB" id="Q14582"/>
<dbReference type="TreeFam" id="TF315654"/>
<dbReference type="PathwayCommons" id="Q14582"/>
<dbReference type="Reactome" id="R-HSA-1251985">
    <property type="pathway name" value="Nuclear signaling by ERBB4"/>
</dbReference>
<dbReference type="SignaLink" id="Q14582"/>
<dbReference type="SIGNOR" id="Q14582"/>
<dbReference type="BioGRID-ORCS" id="10608">
    <property type="hits" value="10 hits in 1175 CRISPR screens"/>
</dbReference>
<dbReference type="ChiTaRS" id="MXD4">
    <property type="organism name" value="human"/>
</dbReference>
<dbReference type="GeneWiki" id="MXD4"/>
<dbReference type="GenomeRNAi" id="10608"/>
<dbReference type="Pharos" id="Q14582">
    <property type="development level" value="Tbio"/>
</dbReference>
<dbReference type="PRO" id="PR:Q14582"/>
<dbReference type="Proteomes" id="UP000005640">
    <property type="component" value="Chromosome 4"/>
</dbReference>
<dbReference type="RNAct" id="Q14582">
    <property type="molecule type" value="protein"/>
</dbReference>
<dbReference type="Bgee" id="ENSG00000123933">
    <property type="expression patterns" value="Expressed in right hemisphere of cerebellum and 170 other cell types or tissues"/>
</dbReference>
<dbReference type="ExpressionAtlas" id="Q14582">
    <property type="expression patterns" value="baseline and differential"/>
</dbReference>
<dbReference type="GO" id="GO:0000785">
    <property type="term" value="C:chromatin"/>
    <property type="evidence" value="ECO:0000247"/>
    <property type="project" value="NTNU_SB"/>
</dbReference>
<dbReference type="GO" id="GO:0005654">
    <property type="term" value="C:nucleoplasm"/>
    <property type="evidence" value="ECO:0000304"/>
    <property type="project" value="Reactome"/>
</dbReference>
<dbReference type="GO" id="GO:0000981">
    <property type="term" value="F:DNA-binding transcription factor activity, RNA polymerase II-specific"/>
    <property type="evidence" value="ECO:0000247"/>
    <property type="project" value="NTNU_SB"/>
</dbReference>
<dbReference type="GO" id="GO:0046983">
    <property type="term" value="F:protein dimerization activity"/>
    <property type="evidence" value="ECO:0007669"/>
    <property type="project" value="InterPro"/>
</dbReference>
<dbReference type="GO" id="GO:0000978">
    <property type="term" value="F:RNA polymerase II cis-regulatory region sequence-specific DNA binding"/>
    <property type="evidence" value="ECO:0000318"/>
    <property type="project" value="GO_Central"/>
</dbReference>
<dbReference type="GO" id="GO:0000122">
    <property type="term" value="P:negative regulation of transcription by RNA polymerase II"/>
    <property type="evidence" value="ECO:0000250"/>
    <property type="project" value="ARUK-UCL"/>
</dbReference>
<dbReference type="GO" id="GO:0006357">
    <property type="term" value="P:regulation of transcription by RNA polymerase II"/>
    <property type="evidence" value="ECO:0000318"/>
    <property type="project" value="GO_Central"/>
</dbReference>
<dbReference type="CDD" id="cd18929">
    <property type="entry name" value="bHLHzip_Mad4"/>
    <property type="match status" value="1"/>
</dbReference>
<dbReference type="FunFam" id="4.10.280.10:FF:000014">
    <property type="entry name" value="Max dimerization protein 1"/>
    <property type="match status" value="1"/>
</dbReference>
<dbReference type="Gene3D" id="4.10.280.10">
    <property type="entry name" value="Helix-loop-helix DNA-binding domain"/>
    <property type="match status" value="1"/>
</dbReference>
<dbReference type="InterPro" id="IPR011598">
    <property type="entry name" value="bHLH_dom"/>
</dbReference>
<dbReference type="InterPro" id="IPR036638">
    <property type="entry name" value="HLH_DNA-bd_sf"/>
</dbReference>
<dbReference type="PANTHER" id="PTHR11969:SF4">
    <property type="entry name" value="MAX DIMERIZATION PROTEIN 4"/>
    <property type="match status" value="1"/>
</dbReference>
<dbReference type="PANTHER" id="PTHR11969">
    <property type="entry name" value="MAX DIMERIZATION, MAD"/>
    <property type="match status" value="1"/>
</dbReference>
<dbReference type="Pfam" id="PF00010">
    <property type="entry name" value="HLH"/>
    <property type="match status" value="1"/>
</dbReference>
<dbReference type="SMART" id="SM00353">
    <property type="entry name" value="HLH"/>
    <property type="match status" value="1"/>
</dbReference>
<dbReference type="SUPFAM" id="SSF47459">
    <property type="entry name" value="HLH, helix-loop-helix DNA-binding domain"/>
    <property type="match status" value="1"/>
</dbReference>
<dbReference type="PROSITE" id="PS50888">
    <property type="entry name" value="BHLH"/>
    <property type="match status" value="1"/>
</dbReference>
<reference key="1">
    <citation type="submission" date="1998-01" db="EMBL/GenBank/DDBJ databases">
        <authorList>
            <person name="Pribill I."/>
            <person name="Barnes G.T."/>
            <person name="Chen J."/>
            <person name="Church D."/>
            <person name="Buckler A."/>
            <person name="Baxendale S."/>
            <person name="Bates G.P."/>
            <person name="Lehrach H."/>
            <person name="Gusella M.J."/>
            <person name="Duyao M.P."/>
            <person name="Ambrose C.M."/>
            <person name="Macdonald M.E."/>
            <person name="Gusella J.F."/>
        </authorList>
    </citation>
    <scope>NUCLEOTIDE SEQUENCE [MRNA]</scope>
</reference>
<reference key="2">
    <citation type="submission" date="1998-08" db="EMBL/GenBank/DDBJ databases">
        <title>Cloning and sequencing a novel human Max-associated protein, hMad4 and characterizing its transcriptional up-regulation in quiescent and senescent human fibroblasts.</title>
        <authorList>
            <person name="Qian J.-F."/>
            <person name="Wang X.-L."/>
            <person name="Wang E."/>
        </authorList>
    </citation>
    <scope>NUCLEOTIDE SEQUENCE [MRNA]</scope>
</reference>
<reference key="3">
    <citation type="submission" date="2003-05" db="EMBL/GenBank/DDBJ databases">
        <title>Cloning of human full-length CDSs in BD Creator(TM) system donor vector.</title>
        <authorList>
            <person name="Kalnine N."/>
            <person name="Chen X."/>
            <person name="Rolfs A."/>
            <person name="Halleck A."/>
            <person name="Hines L."/>
            <person name="Eisenstein S."/>
            <person name="Koundinya M."/>
            <person name="Raphael J."/>
            <person name="Moreira D."/>
            <person name="Kelley T."/>
            <person name="LaBaer J."/>
            <person name="Lin Y."/>
            <person name="Phelan M."/>
            <person name="Farmer A."/>
        </authorList>
    </citation>
    <scope>NUCLEOTIDE SEQUENCE [LARGE SCALE MRNA]</scope>
</reference>
<reference key="4">
    <citation type="journal article" date="2005" name="Nature">
        <title>Generation and annotation of the DNA sequences of human chromosomes 2 and 4.</title>
        <authorList>
            <person name="Hillier L.W."/>
            <person name="Graves T.A."/>
            <person name="Fulton R.S."/>
            <person name="Fulton L.A."/>
            <person name="Pepin K.H."/>
            <person name="Minx P."/>
            <person name="Wagner-McPherson C."/>
            <person name="Layman D."/>
            <person name="Wylie K."/>
            <person name="Sekhon M."/>
            <person name="Becker M.C."/>
            <person name="Fewell G.A."/>
            <person name="Delehaunty K.D."/>
            <person name="Miner T.L."/>
            <person name="Nash W.E."/>
            <person name="Kremitzki C."/>
            <person name="Oddy L."/>
            <person name="Du H."/>
            <person name="Sun H."/>
            <person name="Bradshaw-Cordum H."/>
            <person name="Ali J."/>
            <person name="Carter J."/>
            <person name="Cordes M."/>
            <person name="Harris A."/>
            <person name="Isak A."/>
            <person name="van Brunt A."/>
            <person name="Nguyen C."/>
            <person name="Du F."/>
            <person name="Courtney L."/>
            <person name="Kalicki J."/>
            <person name="Ozersky P."/>
            <person name="Abbott S."/>
            <person name="Armstrong J."/>
            <person name="Belter E.A."/>
            <person name="Caruso L."/>
            <person name="Cedroni M."/>
            <person name="Cotton M."/>
            <person name="Davidson T."/>
            <person name="Desai A."/>
            <person name="Elliott G."/>
            <person name="Erb T."/>
            <person name="Fronick C."/>
            <person name="Gaige T."/>
            <person name="Haakenson W."/>
            <person name="Haglund K."/>
            <person name="Holmes A."/>
            <person name="Harkins R."/>
            <person name="Kim K."/>
            <person name="Kruchowski S.S."/>
            <person name="Strong C.M."/>
            <person name="Grewal N."/>
            <person name="Goyea E."/>
            <person name="Hou S."/>
            <person name="Levy A."/>
            <person name="Martinka S."/>
            <person name="Mead K."/>
            <person name="McLellan M.D."/>
            <person name="Meyer R."/>
            <person name="Randall-Maher J."/>
            <person name="Tomlinson C."/>
            <person name="Dauphin-Kohlberg S."/>
            <person name="Kozlowicz-Reilly A."/>
            <person name="Shah N."/>
            <person name="Swearengen-Shahid S."/>
            <person name="Snider J."/>
            <person name="Strong J.T."/>
            <person name="Thompson J."/>
            <person name="Yoakum M."/>
            <person name="Leonard S."/>
            <person name="Pearman C."/>
            <person name="Trani L."/>
            <person name="Radionenko M."/>
            <person name="Waligorski J.E."/>
            <person name="Wang C."/>
            <person name="Rock S.M."/>
            <person name="Tin-Wollam A.-M."/>
            <person name="Maupin R."/>
            <person name="Latreille P."/>
            <person name="Wendl M.C."/>
            <person name="Yang S.-P."/>
            <person name="Pohl C."/>
            <person name="Wallis J.W."/>
            <person name="Spieth J."/>
            <person name="Bieri T.A."/>
            <person name="Berkowicz N."/>
            <person name="Nelson J.O."/>
            <person name="Osborne J."/>
            <person name="Ding L."/>
            <person name="Meyer R."/>
            <person name="Sabo A."/>
            <person name="Shotland Y."/>
            <person name="Sinha P."/>
            <person name="Wohldmann P.E."/>
            <person name="Cook L.L."/>
            <person name="Hickenbotham M.T."/>
            <person name="Eldred J."/>
            <person name="Williams D."/>
            <person name="Jones T.A."/>
            <person name="She X."/>
            <person name="Ciccarelli F.D."/>
            <person name="Izaurralde E."/>
            <person name="Taylor J."/>
            <person name="Schmutz J."/>
            <person name="Myers R.M."/>
            <person name="Cox D.R."/>
            <person name="Huang X."/>
            <person name="McPherson J.D."/>
            <person name="Mardis E.R."/>
            <person name="Clifton S.W."/>
            <person name="Warren W.C."/>
            <person name="Chinwalla A.T."/>
            <person name="Eddy S.R."/>
            <person name="Marra M.A."/>
            <person name="Ovcharenko I."/>
            <person name="Furey T.S."/>
            <person name="Miller W."/>
            <person name="Eichler E.E."/>
            <person name="Bork P."/>
            <person name="Suyama M."/>
            <person name="Torrents D."/>
            <person name="Waterston R.H."/>
            <person name="Wilson R.K."/>
        </authorList>
    </citation>
    <scope>NUCLEOTIDE SEQUENCE [LARGE SCALE GENOMIC DNA]</scope>
</reference>
<reference key="5">
    <citation type="journal article" date="2004" name="Genome Res.">
        <title>The status, quality, and expansion of the NIH full-length cDNA project: the Mammalian Gene Collection (MGC).</title>
        <authorList>
            <consortium name="The MGC Project Team"/>
        </authorList>
    </citation>
    <scope>NUCLEOTIDE SEQUENCE [LARGE SCALE MRNA]</scope>
    <source>
        <tissue>Lung</tissue>
    </source>
</reference>
<organism>
    <name type="scientific">Homo sapiens</name>
    <name type="common">Human</name>
    <dbReference type="NCBI Taxonomy" id="9606"/>
    <lineage>
        <taxon>Eukaryota</taxon>
        <taxon>Metazoa</taxon>
        <taxon>Chordata</taxon>
        <taxon>Craniata</taxon>
        <taxon>Vertebrata</taxon>
        <taxon>Euteleostomi</taxon>
        <taxon>Mammalia</taxon>
        <taxon>Eutheria</taxon>
        <taxon>Euarchontoglires</taxon>
        <taxon>Primates</taxon>
        <taxon>Haplorrhini</taxon>
        <taxon>Catarrhini</taxon>
        <taxon>Hominidae</taxon>
        <taxon>Homo</taxon>
    </lineage>
</organism>
<feature type="chain" id="PRO_0000127266" description="Max dimerization protein 4">
    <location>
        <begin position="1"/>
        <end position="209"/>
    </location>
</feature>
<feature type="domain" description="bHLH" evidence="2">
    <location>
        <begin position="53"/>
        <end position="105"/>
    </location>
</feature>
<feature type="region of interest" description="Interaction with SIN3A and SIN3B" evidence="1">
    <location>
        <begin position="6"/>
        <end position="23"/>
    </location>
</feature>
<feature type="region of interest" description="Disordered" evidence="3">
    <location>
        <begin position="140"/>
        <end position="209"/>
    </location>
</feature>
<feature type="compositionally biased region" description="Acidic residues" evidence="3">
    <location>
        <begin position="153"/>
        <end position="163"/>
    </location>
</feature>
<feature type="compositionally biased region" description="Basic residues" evidence="3">
    <location>
        <begin position="199"/>
        <end position="209"/>
    </location>
</feature>
<keyword id="KW-0238">DNA-binding</keyword>
<keyword id="KW-0539">Nucleus</keyword>
<keyword id="KW-1267">Proteomics identification</keyword>
<keyword id="KW-1185">Reference proteome</keyword>
<keyword id="KW-0678">Repressor</keyword>
<keyword id="KW-0804">Transcription</keyword>
<keyword id="KW-0805">Transcription regulation</keyword>
<comment type="function">
    <text evidence="1">Transcriptional repressor. Binds with MAX to form a sequence-specific DNA-binding protein complex which recognizes the core sequence 5'-CAC[GA]TG-3'. Antagonizes MYC transcriptional activity by competing for MAX and suppresses MYC dependent cell transformation (By similarity).</text>
</comment>
<comment type="subunit">
    <text evidence="1">Efficient DNA binding requires dimerization with another bHLH protein. Binds DNA as a heterodimer with MAX. Interacts with SIN3A AND SIN3B. Interacts with RNF17 (By similarity).</text>
</comment>
<comment type="interaction">
    <interactant intactId="EBI-3943670">
        <id>Q14582</id>
    </interactant>
    <interactant intactId="EBI-3923210">
        <id>Q8TDR4</id>
        <label>TCP10L</label>
    </interactant>
    <organismsDiffer>false</organismsDiffer>
    <experiments>6</experiments>
</comment>
<comment type="subcellular location">
    <subcellularLocation>
        <location evidence="2">Nucleus</location>
    </subcellularLocation>
</comment>
<evidence type="ECO:0000250" key="1"/>
<evidence type="ECO:0000255" key="2">
    <source>
        <dbReference type="PROSITE-ProRule" id="PRU00981"/>
    </source>
</evidence>
<evidence type="ECO:0000256" key="3">
    <source>
        <dbReference type="SAM" id="MobiDB-lite"/>
    </source>
</evidence>
<name>MAD4_HUMAN</name>
<accession>Q14582</accession>
<accession>A2A335</accession>
<accession>Q5TZX4</accession>
<gene>
    <name type="primary">MXD4</name>
    <name type="synonym">BHLHC12</name>
    <name type="synonym">MAD4</name>
</gene>
<protein>
    <recommendedName>
        <fullName>Max dimerization protein 4</fullName>
        <shortName>Max dimerizer 4</shortName>
    </recommendedName>
    <alternativeName>
        <fullName>Class C basic helix-loop-helix protein 12</fullName>
        <shortName>bHLHc12</shortName>
    </alternativeName>
    <alternativeName>
        <fullName>Max-associated protein 4</fullName>
    </alternativeName>
    <alternativeName>
        <fullName>Max-interacting transcriptional repressor MAD4</fullName>
    </alternativeName>
</protein>